<proteinExistence type="predicted"/>
<reference key="1">
    <citation type="journal article" date="1996" name="Nucleic Acids Res.">
        <title>Complete sequence analysis of the genome of the bacterium Mycoplasma pneumoniae.</title>
        <authorList>
            <person name="Himmelreich R."/>
            <person name="Hilbert H."/>
            <person name="Plagens H."/>
            <person name="Pirkl E."/>
            <person name="Li B.-C."/>
            <person name="Herrmann R."/>
        </authorList>
    </citation>
    <scope>NUCLEOTIDE SEQUENCE [LARGE SCALE GENOMIC DNA]</scope>
    <source>
        <strain>ATCC 29342 / M129 / Subtype 1</strain>
    </source>
</reference>
<gene>
    <name type="ordered locus">MPN_666</name>
    <name type="ORF">K05_orf251</name>
    <name type="ORF">MP176</name>
</gene>
<protein>
    <recommendedName>
        <fullName>Uncharacterized protein MG452 homolog</fullName>
    </recommendedName>
</protein>
<dbReference type="EMBL" id="U00089">
    <property type="protein sequence ID" value="AAB95824.1"/>
    <property type="molecule type" value="Genomic_DNA"/>
</dbReference>
<dbReference type="PIR" id="S73502">
    <property type="entry name" value="S73502"/>
</dbReference>
<dbReference type="RefSeq" id="NP_110355.1">
    <property type="nucleotide sequence ID" value="NC_000912.1"/>
</dbReference>
<dbReference type="RefSeq" id="WP_010875023.1">
    <property type="nucleotide sequence ID" value="NZ_OU342337.1"/>
</dbReference>
<dbReference type="SMR" id="P75125"/>
<dbReference type="STRING" id="272634.MPN_666"/>
<dbReference type="EnsemblBacteria" id="AAB95824">
    <property type="protein sequence ID" value="AAB95824"/>
    <property type="gene ID" value="MPN_666"/>
</dbReference>
<dbReference type="KEGG" id="mpn:MPN_666"/>
<dbReference type="PATRIC" id="fig|272634.6.peg.731"/>
<dbReference type="HOGENOM" id="CLU_091666_0_0_14"/>
<dbReference type="OrthoDB" id="399197at2"/>
<dbReference type="BioCyc" id="MPNE272634:G1GJ3-1067-MONOMER"/>
<dbReference type="Proteomes" id="UP000000808">
    <property type="component" value="Chromosome"/>
</dbReference>
<dbReference type="GO" id="GO:0005886">
    <property type="term" value="C:plasma membrane"/>
    <property type="evidence" value="ECO:0007669"/>
    <property type="project" value="UniProtKB-SubCell"/>
</dbReference>
<dbReference type="InterPro" id="IPR011631">
    <property type="entry name" value="DUF1600"/>
</dbReference>
<dbReference type="Pfam" id="PF07667">
    <property type="entry name" value="DUF1600"/>
    <property type="match status" value="1"/>
</dbReference>
<dbReference type="PIRSF" id="PIRSF006834">
    <property type="entry name" value="UCP006834"/>
    <property type="match status" value="1"/>
</dbReference>
<sequence>MEQNNCKIRTWFAKLALAQKVFLGVIPLFFICFVFVIADIVISLQNKGHIIEEIDKFTNQSNVMLLIYACWYVSKPKSHYLKNQQFFLSAFAYIIFTFLGYNVILAASQQAYSDKDAYSLASSVFLHVLAPIAFLVAGIVKMKTDKDVTFNHFWKSLGYFMIYPLVYGLYLATIPYVRGHYVSDDGKSTTYVVYGEITNTKDNPIVAWPVVICFLFIYFPLSFLAVYALQCKLLNRPLKAQFKCATNKCPK</sequence>
<evidence type="ECO:0000255" key="1"/>
<evidence type="ECO:0000305" key="2"/>
<accession>P75125</accession>
<keyword id="KW-1003">Cell membrane</keyword>
<keyword id="KW-0472">Membrane</keyword>
<keyword id="KW-1185">Reference proteome</keyword>
<keyword id="KW-0812">Transmembrane</keyword>
<keyword id="KW-1133">Transmembrane helix</keyword>
<organism>
    <name type="scientific">Mycoplasma pneumoniae (strain ATCC 29342 / M129 / Subtype 1)</name>
    <name type="common">Mycoplasmoides pneumoniae</name>
    <dbReference type="NCBI Taxonomy" id="272634"/>
    <lineage>
        <taxon>Bacteria</taxon>
        <taxon>Bacillati</taxon>
        <taxon>Mycoplasmatota</taxon>
        <taxon>Mycoplasmoidales</taxon>
        <taxon>Mycoplasmoidaceae</taxon>
        <taxon>Mycoplasmoides</taxon>
    </lineage>
</organism>
<comment type="subcellular location">
    <subcellularLocation>
        <location evidence="2">Cell membrane</location>
        <topology evidence="2">Multi-pass membrane protein</topology>
    </subcellularLocation>
</comment>
<name>Y666_MYCPN</name>
<feature type="chain" id="PRO_0000210624" description="Uncharacterized protein MG452 homolog">
    <location>
        <begin position="1"/>
        <end position="251"/>
    </location>
</feature>
<feature type="transmembrane region" description="Helical" evidence="1">
    <location>
        <begin position="22"/>
        <end position="42"/>
    </location>
</feature>
<feature type="transmembrane region" description="Helical" evidence="1">
    <location>
        <begin position="86"/>
        <end position="106"/>
    </location>
</feature>
<feature type="transmembrane region" description="Helical" evidence="1">
    <location>
        <begin position="120"/>
        <end position="140"/>
    </location>
</feature>
<feature type="transmembrane region" description="Helical" evidence="1">
    <location>
        <begin position="157"/>
        <end position="177"/>
    </location>
</feature>
<feature type="transmembrane region" description="Helical" evidence="1">
    <location>
        <begin position="205"/>
        <end position="225"/>
    </location>
</feature>